<evidence type="ECO:0000269" key="1">
    <source>
    </source>
</evidence>
<evidence type="ECO:0000269" key="2">
    <source>
    </source>
</evidence>
<evidence type="ECO:0000305" key="3"/>
<evidence type="ECO:0000305" key="4">
    <source>
    </source>
</evidence>
<evidence type="ECO:0000312" key="5">
    <source>
        <dbReference type="Proteomes" id="UP000000805"/>
    </source>
</evidence>
<evidence type="ECO:0007744" key="6">
    <source>
        <dbReference type="PDB" id="1F9A"/>
    </source>
</evidence>
<evidence type="ECO:0007829" key="7">
    <source>
        <dbReference type="PDB" id="1F9A"/>
    </source>
</evidence>
<name>NADM_METJA</name>
<dbReference type="EC" id="2.7.7.1" evidence="2"/>
<dbReference type="EMBL" id="L77117">
    <property type="protein sequence ID" value="AAB98533.1"/>
    <property type="molecule type" value="Genomic_DNA"/>
</dbReference>
<dbReference type="PIR" id="E64367">
    <property type="entry name" value="E64367"/>
</dbReference>
<dbReference type="RefSeq" id="WP_010870045.1">
    <property type="nucleotide sequence ID" value="NC_000909.1"/>
</dbReference>
<dbReference type="PDB" id="1F9A">
    <property type="method" value="X-ray"/>
    <property type="resolution" value="2.00 A"/>
    <property type="chains" value="A/B/C/D/E/F=2-168"/>
</dbReference>
<dbReference type="PDBsum" id="1F9A"/>
<dbReference type="SMR" id="Q57961"/>
<dbReference type="FunCoup" id="Q57961">
    <property type="interactions" value="11"/>
</dbReference>
<dbReference type="STRING" id="243232.MJ_0541"/>
<dbReference type="PaxDb" id="243232-MJ_0541"/>
<dbReference type="EnsemblBacteria" id="AAB98533">
    <property type="protein sequence ID" value="AAB98533"/>
    <property type="gene ID" value="MJ_0541"/>
</dbReference>
<dbReference type="GeneID" id="1451406"/>
<dbReference type="KEGG" id="mja:MJ_0541"/>
<dbReference type="eggNOG" id="arCOG00972">
    <property type="taxonomic scope" value="Archaea"/>
</dbReference>
<dbReference type="HOGENOM" id="CLU_108783_0_0_2"/>
<dbReference type="InParanoid" id="Q57961"/>
<dbReference type="OrthoDB" id="264480at2157"/>
<dbReference type="PhylomeDB" id="Q57961"/>
<dbReference type="BRENDA" id="2.7.7.1">
    <property type="organism ID" value="3260"/>
</dbReference>
<dbReference type="UniPathway" id="UPA00253">
    <property type="reaction ID" value="UER00600"/>
</dbReference>
<dbReference type="EvolutionaryTrace" id="Q57961"/>
<dbReference type="Proteomes" id="UP000000805">
    <property type="component" value="Chromosome"/>
</dbReference>
<dbReference type="GO" id="GO:0005737">
    <property type="term" value="C:cytoplasm"/>
    <property type="evidence" value="ECO:0007669"/>
    <property type="project" value="UniProtKB-SubCell"/>
</dbReference>
<dbReference type="GO" id="GO:0005524">
    <property type="term" value="F:ATP binding"/>
    <property type="evidence" value="ECO:0007669"/>
    <property type="project" value="UniProtKB-KW"/>
</dbReference>
<dbReference type="GO" id="GO:0000309">
    <property type="term" value="F:nicotinamide-nucleotide adenylyltransferase activity"/>
    <property type="evidence" value="ECO:0007669"/>
    <property type="project" value="UniProtKB-UniRule"/>
</dbReference>
<dbReference type="GO" id="GO:0009435">
    <property type="term" value="P:NAD biosynthetic process"/>
    <property type="evidence" value="ECO:0007669"/>
    <property type="project" value="UniProtKB-UniRule"/>
</dbReference>
<dbReference type="CDD" id="cd02166">
    <property type="entry name" value="NMNAT_Archaea"/>
    <property type="match status" value="1"/>
</dbReference>
<dbReference type="Gene3D" id="3.40.50.620">
    <property type="entry name" value="HUPs"/>
    <property type="match status" value="1"/>
</dbReference>
<dbReference type="HAMAP" id="MF_00243">
    <property type="entry name" value="NMN_adenylyltr"/>
    <property type="match status" value="1"/>
</dbReference>
<dbReference type="InterPro" id="IPR004821">
    <property type="entry name" value="Cyt_trans-like"/>
</dbReference>
<dbReference type="InterPro" id="IPR006418">
    <property type="entry name" value="NMN_Atrans_arc"/>
</dbReference>
<dbReference type="InterPro" id="IPR014729">
    <property type="entry name" value="Rossmann-like_a/b/a_fold"/>
</dbReference>
<dbReference type="NCBIfam" id="TIGR01527">
    <property type="entry name" value="arch_NMN_Atrans"/>
    <property type="match status" value="1"/>
</dbReference>
<dbReference type="NCBIfam" id="TIGR00125">
    <property type="entry name" value="cyt_tran_rel"/>
    <property type="match status" value="1"/>
</dbReference>
<dbReference type="NCBIfam" id="NF002243">
    <property type="entry name" value="PRK01153.1"/>
    <property type="match status" value="1"/>
</dbReference>
<dbReference type="PANTHER" id="PTHR21342:SF0">
    <property type="entry name" value="BIFUNCTIONAL NMN ADENYLYLTRANSFERASE_NUDIX HYDROLASE"/>
    <property type="match status" value="1"/>
</dbReference>
<dbReference type="PANTHER" id="PTHR21342">
    <property type="entry name" value="PHOSPHOPANTETHEINE ADENYLYLTRANSFERASE"/>
    <property type="match status" value="1"/>
</dbReference>
<dbReference type="Pfam" id="PF01467">
    <property type="entry name" value="CTP_transf_like"/>
    <property type="match status" value="1"/>
</dbReference>
<dbReference type="SUPFAM" id="SSF52374">
    <property type="entry name" value="Nucleotidylyl transferase"/>
    <property type="match status" value="1"/>
</dbReference>
<gene>
    <name type="ordered locus">MJ0541</name>
</gene>
<accession>Q57961</accession>
<sequence>MRGFIIGRFQPFHKGHLEVIKKIAEEVDEIIIGIGSAQKSHTLENPFTAGERILMITQSLKDYDLTYYPIPIKDIEFNSIWVSYVESLTPPFDIVYSGNPLVRVLFEERGYEVKRPEMFNRKEYSGTEIRRRMLNGEKWEHLVPKAVVDVIKEIKGVERLRKLAQTDK</sequence>
<organism evidence="5">
    <name type="scientific">Methanocaldococcus jannaschii (strain ATCC 43067 / DSM 2661 / JAL-1 / JCM 10045 / NBRC 100440)</name>
    <name type="common">Methanococcus jannaschii</name>
    <dbReference type="NCBI Taxonomy" id="243232"/>
    <lineage>
        <taxon>Archaea</taxon>
        <taxon>Methanobacteriati</taxon>
        <taxon>Methanobacteriota</taxon>
        <taxon>Methanomada group</taxon>
        <taxon>Methanococci</taxon>
        <taxon>Methanococcales</taxon>
        <taxon>Methanocaldococcaceae</taxon>
        <taxon>Methanocaldococcus</taxon>
    </lineage>
</organism>
<protein>
    <recommendedName>
        <fullName>Nicotinamide-nucleotide adenylyltransferase</fullName>
        <ecNumber evidence="2">2.7.7.1</ecNumber>
    </recommendedName>
    <alternativeName>
        <fullName>NAD(+) diphosphorylase</fullName>
    </alternativeName>
    <alternativeName>
        <fullName>NAD(+) pyrophosphorylase</fullName>
    </alternativeName>
    <alternativeName>
        <fullName>NMN adenylyltransferase</fullName>
    </alternativeName>
</protein>
<proteinExistence type="evidence at protein level"/>
<keyword id="KW-0002">3D-structure</keyword>
<keyword id="KW-0067">ATP-binding</keyword>
<keyword id="KW-0963">Cytoplasm</keyword>
<keyword id="KW-0903">Direct protein sequencing</keyword>
<keyword id="KW-0520">NAD</keyword>
<keyword id="KW-0547">Nucleotide-binding</keyword>
<keyword id="KW-0548">Nucleotidyltransferase</keyword>
<keyword id="KW-0662">Pyridine nucleotide biosynthesis</keyword>
<keyword id="KW-1185">Reference proteome</keyword>
<keyword id="KW-0808">Transferase</keyword>
<comment type="function">
    <text evidence="2">Catalyzes the formation of NAD(+) from nicotinamide mononucleotide (NMN) and ATP.</text>
</comment>
<comment type="catalytic activity">
    <reaction evidence="2">
        <text>beta-nicotinamide D-ribonucleotide + ATP + H(+) = diphosphate + NAD(+)</text>
        <dbReference type="Rhea" id="RHEA:21360"/>
        <dbReference type="ChEBI" id="CHEBI:14649"/>
        <dbReference type="ChEBI" id="CHEBI:15378"/>
        <dbReference type="ChEBI" id="CHEBI:30616"/>
        <dbReference type="ChEBI" id="CHEBI:33019"/>
        <dbReference type="ChEBI" id="CHEBI:57540"/>
        <dbReference type="EC" id="2.7.7.1"/>
    </reaction>
    <physiologicalReaction direction="left-to-right" evidence="2">
        <dbReference type="Rhea" id="RHEA:21361"/>
    </physiologicalReaction>
</comment>
<comment type="pathway">
    <text>Cofactor biosynthesis; NAD(+) biosynthesis; NAD(+) from nicotinamide D-ribonucleotide: step 1/1.</text>
</comment>
<comment type="subunit">
    <text evidence="1">Homohexamer existing as a trimer of dimers.</text>
</comment>
<comment type="subcellular location">
    <subcellularLocation>
        <location>Cytoplasm</location>
    </subcellularLocation>
</comment>
<comment type="similarity">
    <text evidence="3">Belongs to the archaeal NMN adenylyltransferase family.</text>
</comment>
<feature type="initiator methionine" description="Removed" evidence="4">
    <location>
        <position position="1"/>
    </location>
</feature>
<feature type="chain" id="PRO_0000134992" description="Nicotinamide-nucleotide adenylyltransferase">
    <location>
        <begin position="2"/>
        <end position="168"/>
    </location>
</feature>
<feature type="binding site" evidence="1 6">
    <location>
        <position position="8"/>
    </location>
    <ligand>
        <name>ATP</name>
        <dbReference type="ChEBI" id="CHEBI:30616"/>
    </ligand>
</feature>
<feature type="binding site" evidence="1 6">
    <location>
        <position position="9"/>
    </location>
    <ligand>
        <name>ATP</name>
        <dbReference type="ChEBI" id="CHEBI:30616"/>
    </ligand>
</feature>
<feature type="binding site" evidence="1 6">
    <location>
        <position position="13"/>
    </location>
    <ligand>
        <name>ATP</name>
        <dbReference type="ChEBI" id="CHEBI:30616"/>
    </ligand>
</feature>
<feature type="binding site" evidence="1 6">
    <location>
        <position position="16"/>
    </location>
    <ligand>
        <name>ATP</name>
        <dbReference type="ChEBI" id="CHEBI:30616"/>
    </ligand>
</feature>
<feature type="binding site" evidence="1 6">
    <location>
        <position position="119"/>
    </location>
    <ligand>
        <name>ATP</name>
        <dbReference type="ChEBI" id="CHEBI:30616"/>
    </ligand>
</feature>
<feature type="binding site" evidence="1 6">
    <location>
        <position position="121"/>
    </location>
    <ligand>
        <name>ATP</name>
        <dbReference type="ChEBI" id="CHEBI:30616"/>
    </ligand>
</feature>
<feature type="binding site" evidence="1 6">
    <location>
        <position position="124"/>
    </location>
    <ligand>
        <name>ATP</name>
        <dbReference type="ChEBI" id="CHEBI:30616"/>
    </ligand>
</feature>
<feature type="binding site" evidence="1 6">
    <location>
        <position position="126"/>
    </location>
    <ligand>
        <name>ATP</name>
        <dbReference type="ChEBI" id="CHEBI:30616"/>
    </ligand>
</feature>
<feature type="binding site" evidence="1 6">
    <location>
        <position position="127"/>
    </location>
    <ligand>
        <name>ATP</name>
        <dbReference type="ChEBI" id="CHEBI:30616"/>
    </ligand>
</feature>
<feature type="binding site" evidence="1 6">
    <location>
        <position position="130"/>
    </location>
    <ligand>
        <name>ATP</name>
        <dbReference type="ChEBI" id="CHEBI:30616"/>
    </ligand>
</feature>
<feature type="strand" evidence="7">
    <location>
        <begin position="2"/>
        <end position="7"/>
    </location>
</feature>
<feature type="helix" evidence="7">
    <location>
        <begin position="14"/>
        <end position="23"/>
    </location>
</feature>
<feature type="turn" evidence="7">
    <location>
        <begin position="24"/>
        <end position="26"/>
    </location>
</feature>
<feature type="strand" evidence="7">
    <location>
        <begin position="28"/>
        <end position="34"/>
    </location>
</feature>
<feature type="strand" evidence="7">
    <location>
        <begin position="41"/>
        <end position="44"/>
    </location>
</feature>
<feature type="helix" evidence="7">
    <location>
        <begin position="49"/>
        <end position="60"/>
    </location>
</feature>
<feature type="strand" evidence="7">
    <location>
        <begin position="66"/>
        <end position="71"/>
    </location>
</feature>
<feature type="helix" evidence="7">
    <location>
        <begin position="78"/>
        <end position="80"/>
    </location>
</feature>
<feature type="helix" evidence="7">
    <location>
        <begin position="81"/>
        <end position="88"/>
    </location>
</feature>
<feature type="strand" evidence="7">
    <location>
        <begin position="93"/>
        <end position="96"/>
    </location>
</feature>
<feature type="helix" evidence="7">
    <location>
        <begin position="100"/>
        <end position="108"/>
    </location>
</feature>
<feature type="strand" evidence="7">
    <location>
        <begin position="112"/>
        <end position="114"/>
    </location>
</feature>
<feature type="turn" evidence="7">
    <location>
        <begin position="121"/>
        <end position="123"/>
    </location>
</feature>
<feature type="helix" evidence="7">
    <location>
        <begin position="126"/>
        <end position="135"/>
    </location>
</feature>
<feature type="helix" evidence="7">
    <location>
        <begin position="140"/>
        <end position="142"/>
    </location>
</feature>
<feature type="helix" evidence="7">
    <location>
        <begin position="145"/>
        <end position="154"/>
    </location>
</feature>
<feature type="helix" evidence="7">
    <location>
        <begin position="156"/>
        <end position="163"/>
    </location>
</feature>
<reference key="1">
    <citation type="journal article" date="1996" name="Science">
        <title>Complete genome sequence of the methanogenic archaeon, Methanococcus jannaschii.</title>
        <authorList>
            <person name="Bult C.J."/>
            <person name="White O."/>
            <person name="Olsen G.J."/>
            <person name="Zhou L."/>
            <person name="Fleischmann R.D."/>
            <person name="Sutton G.G."/>
            <person name="Blake J.A."/>
            <person name="FitzGerald L.M."/>
            <person name="Clayton R.A."/>
            <person name="Gocayne J.D."/>
            <person name="Kerlavage A.R."/>
            <person name="Dougherty B.A."/>
            <person name="Tomb J.-F."/>
            <person name="Adams M.D."/>
            <person name="Reich C.I."/>
            <person name="Overbeek R."/>
            <person name="Kirkness E.F."/>
            <person name="Weinstock K.G."/>
            <person name="Merrick J.M."/>
            <person name="Glodek A."/>
            <person name="Scott J.L."/>
            <person name="Geoghagen N.S.M."/>
            <person name="Weidman J.F."/>
            <person name="Fuhrmann J.L."/>
            <person name="Nguyen D."/>
            <person name="Utterback T.R."/>
            <person name="Kelley J.M."/>
            <person name="Peterson J.D."/>
            <person name="Sadow P.W."/>
            <person name="Hanna M.C."/>
            <person name="Cotton M.D."/>
            <person name="Roberts K.M."/>
            <person name="Hurst M.A."/>
            <person name="Kaine B.P."/>
            <person name="Borodovsky M."/>
            <person name="Klenk H.-P."/>
            <person name="Fraser C.M."/>
            <person name="Smith H.O."/>
            <person name="Woese C.R."/>
            <person name="Venter J.C."/>
        </authorList>
    </citation>
    <scope>NUCLEOTIDE SEQUENCE [LARGE SCALE GENOMIC DNA]</scope>
    <source>
        <strain>ATCC 43067 / DSM 2661 / JAL-1 / JCM 10045 / NBRC 100440</strain>
    </source>
</reference>
<reference key="2">
    <citation type="journal article" date="1997" name="J. Bacteriol.">
        <title>Characterization of nicotinamide mononucleotide adenylyltransferase from thermophilic archaea.</title>
        <authorList>
            <person name="Raffaelli N."/>
            <person name="Pisani F.M."/>
            <person name="Lorenzi T."/>
            <person name="Emanuelli M."/>
            <person name="Amici A."/>
            <person name="Ruggieri S."/>
            <person name="Magni G."/>
        </authorList>
    </citation>
    <scope>PROTEIN SEQUENCE OF 2-6</scope>
    <scope>CHARACTERIZATION</scope>
</reference>
<reference key="3">
    <citation type="journal article" date="1999" name="Mol. Cell. Biochem.">
        <title>Identification of the archaeal NMN adenylytransferase gene.</title>
        <authorList>
            <person name="Raffaelli N."/>
            <person name="Emanuelli M."/>
            <person name="Pisani F.M."/>
            <person name="Amici A."/>
            <person name="Lorenzi T."/>
            <person name="Ruggieri S."/>
            <person name="Magni G."/>
        </authorList>
    </citation>
    <scope>CHARACTERIZATION</scope>
</reference>
<reference key="4">
    <citation type="journal article" date="2009" name="J. Neurosci.">
        <title>Nicotinamide mononucleotide adenylyl transferase-mediated axonal protection requires enzymatic activity but not increased levels of neuronal nicotinamide adenine dinucleotide.</title>
        <authorList>
            <person name="Sasaki Y."/>
            <person name="Vohra B.P."/>
            <person name="Lund F.E."/>
            <person name="Milbrandt J."/>
        </authorList>
    </citation>
    <scope>FUNCTION</scope>
    <scope>CATALYTIC ACTIVITY</scope>
</reference>
<reference evidence="6" key="5">
    <citation type="journal article" date="2000" name="Structure">
        <title>Structure of nicotinamide mononucleotide adenylyltransferase: a key enzyme in NAD(+) biosynthesis.</title>
        <authorList>
            <person name="D'Angelo I."/>
            <person name="Raffaelli N."/>
            <person name="Dabusti V."/>
            <person name="Lorenzi T."/>
            <person name="Magni G."/>
            <person name="Rizzi M."/>
        </authorList>
    </citation>
    <scope>X-RAY CRYSTALLOGRAPHY (2.00 ANGSTROMS) IN COMPLEX WITH ATP</scope>
    <scope>SUBUNIT</scope>
</reference>